<proteinExistence type="evidence at protein level"/>
<sequence>MAAAALRGGWCRCPRRCLGSGIQFLSSHNLPHGSSYQISRPGRELTLTKSYSSGSRKGFLSGLLDNIKQELAKNKEMKESIKKFRDEAKKLEESDALQEARRKYKSIESETVRTSEAIKKKLGELTGTVKESLDEVSKSDLGRKIKEGVEEAARTAKQSAESVSKSGEKLGKTAAFKAISQGVESVKKELDESVLGQTGPYRRPERLRKRTEFAGAKFKESKVFEANEEALGVVLHKDSKWYQQWKDFKDNNVVFNRFFEMKMKYDESDNVLIRASRALTDKVTDLLGGLFSKTEMSEVLTEILRVDPTFDKDHFLHQCETDIIPNILEAMISGELDILKDWCYEATYSQLAHPIQQAKALGFQFHSRILDISNVDLAMGKMMEQGPVLIVTFQAQVVMVIKNSKGEVYDGDPDKVQRMLYVWALCRDQEELNPYAAWRLLDISASSTEQIL</sequence>
<reference key="1">
    <citation type="journal article" date="1998" name="Proc. Natl. Acad. Sci. U.S.A.">
        <title>Characterization of mammalian translocase of inner mitochondrial membrane (Tim44) isolated from diabetic newborn mouse kidney.</title>
        <authorList>
            <person name="Wada J."/>
            <person name="Kanwar Y.S."/>
        </authorList>
    </citation>
    <scope>NUCLEOTIDE SEQUENCE [MRNA]</scope>
    <scope>SUBCELLULAR LOCATION</scope>
    <source>
        <strain>CD-1</strain>
        <tissue>Kidney</tissue>
    </source>
</reference>
<reference key="2">
    <citation type="submission" date="2005-07" db="EMBL/GenBank/DDBJ databases">
        <authorList>
            <person name="Mural R.J."/>
            <person name="Adams M.D."/>
            <person name="Myers E.W."/>
            <person name="Smith H.O."/>
            <person name="Venter J.C."/>
        </authorList>
    </citation>
    <scope>NUCLEOTIDE SEQUENCE [LARGE SCALE GENOMIC DNA]</scope>
</reference>
<reference key="3">
    <citation type="journal article" date="2004" name="Genome Res.">
        <title>The status, quality, and expansion of the NIH full-length cDNA project: the Mammalian Gene Collection (MGC).</title>
        <authorList>
            <consortium name="The MGC Project Team"/>
        </authorList>
    </citation>
    <scope>NUCLEOTIDE SEQUENCE [LARGE SCALE MRNA]</scope>
    <source>
        <strain>NMRI</strain>
        <tissue>Mammary tumor</tissue>
    </source>
</reference>
<reference key="4">
    <citation type="journal article" date="2010" name="Cell">
        <title>A tissue-specific atlas of mouse protein phosphorylation and expression.</title>
        <authorList>
            <person name="Huttlin E.L."/>
            <person name="Jedrychowski M.P."/>
            <person name="Elias J.E."/>
            <person name="Goswami T."/>
            <person name="Rad R."/>
            <person name="Beausoleil S.A."/>
            <person name="Villen J."/>
            <person name="Haas W."/>
            <person name="Sowa M.E."/>
            <person name="Gygi S.P."/>
        </authorList>
    </citation>
    <scope>IDENTIFICATION BY MASS SPECTROMETRY [LARGE SCALE ANALYSIS]</scope>
    <source>
        <tissue>Brain</tissue>
        <tissue>Brown adipose tissue</tissue>
        <tissue>Heart</tissue>
        <tissue>Kidney</tissue>
        <tissue>Liver</tissue>
        <tissue>Lung</tissue>
        <tissue>Pancreas</tissue>
        <tissue>Spleen</tissue>
        <tissue>Testis</tissue>
    </source>
</reference>
<reference key="5">
    <citation type="journal article" date="2013" name="Mol. Cell">
        <title>SIRT5-mediated lysine desuccinylation impacts diverse metabolic pathways.</title>
        <authorList>
            <person name="Park J."/>
            <person name="Chen Y."/>
            <person name="Tishkoff D.X."/>
            <person name="Peng C."/>
            <person name="Tan M."/>
            <person name="Dai L."/>
            <person name="Xie Z."/>
            <person name="Zhang Y."/>
            <person name="Zwaans B.M."/>
            <person name="Skinner M.E."/>
            <person name="Lombard D.B."/>
            <person name="Zhao Y."/>
        </authorList>
    </citation>
    <scope>SUCCINYLATION [LARGE SCALE ANALYSIS] AT LYS-177 AND LYS-217</scope>
    <scope>IDENTIFICATION BY MASS SPECTROMETRY [LARGE SCALE ANALYSIS]</scope>
    <source>
        <tissue>Liver</tissue>
    </source>
</reference>
<reference key="6">
    <citation type="journal article" date="2019" name="Nature">
        <title>The ADP/ATP translocase drives mitophagy independent of nucleotide exchange.</title>
        <authorList>
            <person name="Hoshino A."/>
            <person name="Wang W.J."/>
            <person name="Wada S."/>
            <person name="McDermott-Roe C."/>
            <person name="Evans C.S."/>
            <person name="Gosis B."/>
            <person name="Morley M.P."/>
            <person name="Rathi K.S."/>
            <person name="Li J."/>
            <person name="Li K."/>
            <person name="Yang S."/>
            <person name="McManus M.J."/>
            <person name="Bowman C."/>
            <person name="Potluri P."/>
            <person name="Levin M."/>
            <person name="Damrauer S."/>
            <person name="Wallace D.C."/>
            <person name="Holzbaur E.L.F."/>
            <person name="Arany Z."/>
        </authorList>
    </citation>
    <scope>FUNCTION</scope>
    <scope>INTERACTION WITH TIMM23; SLC25A4 AND SLC25A5</scope>
    <scope>MUTAGENESIS OF LYS-282</scope>
</reference>
<name>TIM44_MOUSE</name>
<protein>
    <recommendedName>
        <fullName>Mitochondrial import inner membrane translocase subunit TIM44</fullName>
    </recommendedName>
</protein>
<accession>O35857</accession>
<accession>Q2NLC5</accession>
<keyword id="KW-0067">ATP-binding</keyword>
<keyword id="KW-0472">Membrane</keyword>
<keyword id="KW-0496">Mitochondrion</keyword>
<keyword id="KW-0999">Mitochondrion inner membrane</keyword>
<keyword id="KW-0547">Nucleotide-binding</keyword>
<keyword id="KW-0597">Phosphoprotein</keyword>
<keyword id="KW-0653">Protein transport</keyword>
<keyword id="KW-1185">Reference proteome</keyword>
<keyword id="KW-0809">Transit peptide</keyword>
<keyword id="KW-0811">Translocation</keyword>
<keyword id="KW-0813">Transport</keyword>
<feature type="transit peptide" description="Mitochondrion" evidence="3">
    <location>
        <begin position="1"/>
        <end status="unknown"/>
    </location>
</feature>
<feature type="chain" id="PRO_0000034315" description="Mitochondrial import inner membrane translocase subunit TIM44">
    <location>
        <begin status="unknown"/>
        <end position="452"/>
    </location>
</feature>
<feature type="binding site" evidence="3">
    <location>
        <begin position="166"/>
        <end position="173"/>
    </location>
    <ligand>
        <name>ATP</name>
        <dbReference type="ChEBI" id="CHEBI:30616"/>
    </ligand>
</feature>
<feature type="modified residue" description="Phosphothreonine" evidence="1">
    <location>
        <position position="128"/>
    </location>
</feature>
<feature type="modified residue" description="N6-succinyllysine" evidence="7">
    <location>
        <position position="177"/>
    </location>
</feature>
<feature type="modified residue" description="Phosphoserine" evidence="1">
    <location>
        <position position="180"/>
    </location>
</feature>
<feature type="modified residue" description="N6-succinyllysine" evidence="7">
    <location>
        <position position="217"/>
    </location>
</feature>
<feature type="mutagenesis site" description="Abolished interaction with SLC25A4/ANT1." evidence="4">
    <original>K</original>
    <variation>D</variation>
    <location>
        <position position="282"/>
    </location>
</feature>
<feature type="sequence conflict" description="In Ref. 1; AAB97624." evidence="6" ref="1">
    <original>A</original>
    <variation>R</variation>
    <location>
        <position position="5"/>
    </location>
</feature>
<organism>
    <name type="scientific">Mus musculus</name>
    <name type="common">Mouse</name>
    <dbReference type="NCBI Taxonomy" id="10090"/>
    <lineage>
        <taxon>Eukaryota</taxon>
        <taxon>Metazoa</taxon>
        <taxon>Chordata</taxon>
        <taxon>Craniata</taxon>
        <taxon>Vertebrata</taxon>
        <taxon>Euteleostomi</taxon>
        <taxon>Mammalia</taxon>
        <taxon>Eutheria</taxon>
        <taxon>Euarchontoglires</taxon>
        <taxon>Glires</taxon>
        <taxon>Rodentia</taxon>
        <taxon>Myomorpha</taxon>
        <taxon>Muroidea</taxon>
        <taxon>Muridae</taxon>
        <taxon>Murinae</taxon>
        <taxon>Mus</taxon>
        <taxon>Mus</taxon>
    </lineage>
</organism>
<gene>
    <name type="primary">Timm44</name>
    <name type="synonym">Mimt44</name>
    <name type="synonym">Tim44</name>
</gene>
<dbReference type="EMBL" id="U69898">
    <property type="protein sequence ID" value="AAB97624.1"/>
    <property type="molecule type" value="mRNA"/>
</dbReference>
<dbReference type="EMBL" id="CH466566">
    <property type="protein sequence ID" value="EDL21992.1"/>
    <property type="molecule type" value="Genomic_DNA"/>
</dbReference>
<dbReference type="EMBL" id="BC110677">
    <property type="protein sequence ID" value="AAI10678.1"/>
    <property type="molecule type" value="mRNA"/>
</dbReference>
<dbReference type="EMBL" id="BC117523">
    <property type="protein sequence ID" value="AAI17524.1"/>
    <property type="molecule type" value="mRNA"/>
</dbReference>
<dbReference type="EMBL" id="BC117524">
    <property type="protein sequence ID" value="AAI17525.1"/>
    <property type="molecule type" value="mRNA"/>
</dbReference>
<dbReference type="CCDS" id="CCDS22083.1"/>
<dbReference type="RefSeq" id="NP_035722.2">
    <property type="nucleotide sequence ID" value="NM_011592.2"/>
</dbReference>
<dbReference type="SMR" id="O35857"/>
<dbReference type="BioGRID" id="204201">
    <property type="interactions" value="44"/>
</dbReference>
<dbReference type="FunCoup" id="O35857">
    <property type="interactions" value="3325"/>
</dbReference>
<dbReference type="IntAct" id="O35857">
    <property type="interactions" value="2"/>
</dbReference>
<dbReference type="MINT" id="O35857"/>
<dbReference type="STRING" id="10090.ENSMUSP00000003029"/>
<dbReference type="GlyGen" id="O35857">
    <property type="glycosylation" value="1 site, 1 O-linked glycan (1 site)"/>
</dbReference>
<dbReference type="iPTMnet" id="O35857"/>
<dbReference type="PhosphoSitePlus" id="O35857"/>
<dbReference type="SwissPalm" id="O35857"/>
<dbReference type="REPRODUCTION-2DPAGE" id="O35857"/>
<dbReference type="jPOST" id="O35857"/>
<dbReference type="PaxDb" id="10090-ENSMUSP00000003029"/>
<dbReference type="PeptideAtlas" id="O35857"/>
<dbReference type="ProteomicsDB" id="259508"/>
<dbReference type="Pumba" id="O35857"/>
<dbReference type="Antibodypedia" id="24720">
    <property type="antibodies" value="67 antibodies from 22 providers"/>
</dbReference>
<dbReference type="DNASU" id="21856"/>
<dbReference type="Ensembl" id="ENSMUST00000003029.14">
    <property type="protein sequence ID" value="ENSMUSP00000003029.8"/>
    <property type="gene ID" value="ENSMUSG00000002949.16"/>
</dbReference>
<dbReference type="GeneID" id="21856"/>
<dbReference type="KEGG" id="mmu:21856"/>
<dbReference type="UCSC" id="uc009ktq.2">
    <property type="organism name" value="mouse"/>
</dbReference>
<dbReference type="AGR" id="MGI:1343262"/>
<dbReference type="CTD" id="10469"/>
<dbReference type="MGI" id="MGI:1343262">
    <property type="gene designation" value="Timm44"/>
</dbReference>
<dbReference type="VEuPathDB" id="HostDB:ENSMUSG00000002949"/>
<dbReference type="eggNOG" id="KOG2580">
    <property type="taxonomic scope" value="Eukaryota"/>
</dbReference>
<dbReference type="GeneTree" id="ENSGT00390000000051"/>
<dbReference type="HOGENOM" id="CLU_020932_1_1_1"/>
<dbReference type="InParanoid" id="O35857"/>
<dbReference type="OMA" id="NFQMEPF"/>
<dbReference type="OrthoDB" id="10265990at2759"/>
<dbReference type="PhylomeDB" id="O35857"/>
<dbReference type="TreeFam" id="TF106197"/>
<dbReference type="BioGRID-ORCS" id="21856">
    <property type="hits" value="27 hits in 76 CRISPR screens"/>
</dbReference>
<dbReference type="CD-CODE" id="CE726F99">
    <property type="entry name" value="Postsynaptic density"/>
</dbReference>
<dbReference type="ChiTaRS" id="Timm44">
    <property type="organism name" value="mouse"/>
</dbReference>
<dbReference type="PRO" id="PR:O35857"/>
<dbReference type="Proteomes" id="UP000000589">
    <property type="component" value="Chromosome 8"/>
</dbReference>
<dbReference type="RNAct" id="O35857">
    <property type="molecule type" value="protein"/>
</dbReference>
<dbReference type="Bgee" id="ENSMUSG00000002949">
    <property type="expression patterns" value="Expressed in ciliary body and 262 other cell types or tissues"/>
</dbReference>
<dbReference type="GO" id="GO:0001650">
    <property type="term" value="C:fibrillar center"/>
    <property type="evidence" value="ECO:0007669"/>
    <property type="project" value="Ensembl"/>
</dbReference>
<dbReference type="GO" id="GO:0005743">
    <property type="term" value="C:mitochondrial inner membrane"/>
    <property type="evidence" value="ECO:0007005"/>
    <property type="project" value="MGI"/>
</dbReference>
<dbReference type="GO" id="GO:0005759">
    <property type="term" value="C:mitochondrial matrix"/>
    <property type="evidence" value="ECO:0007669"/>
    <property type="project" value="Ensembl"/>
</dbReference>
<dbReference type="GO" id="GO:0005739">
    <property type="term" value="C:mitochondrion"/>
    <property type="evidence" value="ECO:0007005"/>
    <property type="project" value="MGI"/>
</dbReference>
<dbReference type="GO" id="GO:0005744">
    <property type="term" value="C:TIM23 mitochondrial import inner membrane translocase complex"/>
    <property type="evidence" value="ECO:0007669"/>
    <property type="project" value="Ensembl"/>
</dbReference>
<dbReference type="GO" id="GO:0005524">
    <property type="term" value="F:ATP binding"/>
    <property type="evidence" value="ECO:0007669"/>
    <property type="project" value="UniProtKB-KW"/>
</dbReference>
<dbReference type="GO" id="GO:0051087">
    <property type="term" value="F:protein-folding chaperone binding"/>
    <property type="evidence" value="ECO:0007669"/>
    <property type="project" value="InterPro"/>
</dbReference>
<dbReference type="GO" id="GO:0030150">
    <property type="term" value="P:protein import into mitochondrial matrix"/>
    <property type="evidence" value="ECO:0007669"/>
    <property type="project" value="InterPro"/>
</dbReference>
<dbReference type="FunFam" id="3.10.450.240:FF:000001">
    <property type="entry name" value="Mitochondrial import inner membrane translocase subunit TIM44"/>
    <property type="match status" value="1"/>
</dbReference>
<dbReference type="Gene3D" id="3.10.450.240">
    <property type="match status" value="1"/>
</dbReference>
<dbReference type="InterPro" id="IPR032710">
    <property type="entry name" value="NTF2-like_dom_sf"/>
</dbReference>
<dbReference type="InterPro" id="IPR017303">
    <property type="entry name" value="Tim44"/>
</dbReference>
<dbReference type="InterPro" id="IPR039544">
    <property type="entry name" value="Tim44-like"/>
</dbReference>
<dbReference type="InterPro" id="IPR007379">
    <property type="entry name" value="Tim44-like_dom"/>
</dbReference>
<dbReference type="NCBIfam" id="TIGR00984">
    <property type="entry name" value="3a0801s03tim44"/>
    <property type="match status" value="1"/>
</dbReference>
<dbReference type="PANTHER" id="PTHR10721">
    <property type="entry name" value="MITOCHONDRIAL IMPORT INNER MEMBRANE TRANSLOCASE SUBUNIT TIM44"/>
    <property type="match status" value="1"/>
</dbReference>
<dbReference type="PANTHER" id="PTHR10721:SF1">
    <property type="entry name" value="MITOCHONDRIAL IMPORT INNER MEMBRANE TRANSLOCASE SUBUNIT TIM44"/>
    <property type="match status" value="1"/>
</dbReference>
<dbReference type="Pfam" id="PF04280">
    <property type="entry name" value="Tim44"/>
    <property type="match status" value="1"/>
</dbReference>
<dbReference type="PIRSF" id="PIRSF037871">
    <property type="entry name" value="TIM44"/>
    <property type="match status" value="1"/>
</dbReference>
<dbReference type="SMART" id="SM00978">
    <property type="entry name" value="Tim44"/>
    <property type="match status" value="1"/>
</dbReference>
<dbReference type="SUPFAM" id="SSF54427">
    <property type="entry name" value="NTF2-like"/>
    <property type="match status" value="1"/>
</dbReference>
<evidence type="ECO:0000250" key="1">
    <source>
        <dbReference type="UniProtKB" id="O43615"/>
    </source>
</evidence>
<evidence type="ECO:0000250" key="2">
    <source>
        <dbReference type="UniProtKB" id="Q01852"/>
    </source>
</evidence>
<evidence type="ECO:0000255" key="3"/>
<evidence type="ECO:0000269" key="4">
    <source>
    </source>
</evidence>
<evidence type="ECO:0000269" key="5">
    <source>
    </source>
</evidence>
<evidence type="ECO:0000305" key="6"/>
<evidence type="ECO:0007744" key="7">
    <source>
    </source>
</evidence>
<comment type="function">
    <text evidence="2 4">Essential component of the PAM complex, a complex required for the translocation of transit peptide-containing proteins from the inner membrane into the mitochondrial matrix in an ATP-dependent manner (PubMed:31618756). Recruits mitochondrial HSP70 to drive protein translocation into the matrix using ATP as an energy source (By similarity).</text>
</comment>
<comment type="subunit">
    <text evidence="2 4">Probable component of the PAM complex at least composed of a mitochondrial HSP70 protein, GRPEL1 or GRPEL2, TIMM44, TIMM16/PAM16 and TIMM14/DNAJC19 (By similarity). The complex interacts with the TIMM23 component of the TIM23 complex (PubMed:31618756). Interacts with SLC25A4/ANT1 and SLC25A5/ANT2; leading to inhibit the presequence translocase TIMM23, thereby promoting stabilization of PINK1 (PubMed:31618756).</text>
</comment>
<comment type="subcellular location">
    <subcellularLocation>
        <location evidence="5">Mitochondrion inner membrane</location>
        <topology evidence="5">Peripheral membrane protein</topology>
        <orientation evidence="5">Matrix side</orientation>
    </subcellularLocation>
</comment>
<comment type="similarity">
    <text evidence="6">Belongs to the Tim44 family.</text>
</comment>